<evidence type="ECO:0000250" key="1"/>
<evidence type="ECO:0000255" key="2">
    <source>
        <dbReference type="PROSITE-ProRule" id="PRU10013"/>
    </source>
</evidence>
<evidence type="ECO:0000305" key="3"/>
<protein>
    <recommendedName>
        <fullName>Catalase-4</fullName>
        <ecNumber>1.11.1.6</ecNumber>
    </recommendedName>
</protein>
<reference key="1">
    <citation type="submission" date="1997-11" db="EMBL/GenBank/DDBJ databases">
        <authorList>
            <person name="Su H."/>
            <person name="Hardy K.A."/>
            <person name="Hermsmeier D."/>
            <person name="Baum T.J."/>
        </authorList>
    </citation>
    <scope>NUCLEOTIDE SEQUENCE [MRNA]</scope>
    <source>
        <strain>cv. Corsoy 79</strain>
    </source>
</reference>
<gene>
    <name type="primary">CAT4</name>
</gene>
<keyword id="KW-0330">Glyoxysome</keyword>
<keyword id="KW-0349">Heme</keyword>
<keyword id="KW-0376">Hydrogen peroxide</keyword>
<keyword id="KW-0408">Iron</keyword>
<keyword id="KW-0479">Metal-binding</keyword>
<keyword id="KW-0560">Oxidoreductase</keyword>
<keyword id="KW-0575">Peroxidase</keyword>
<keyword id="KW-0576">Peroxisome</keyword>
<keyword id="KW-1185">Reference proteome</keyword>
<proteinExistence type="evidence at transcript level"/>
<accession>O48561</accession>
<organism>
    <name type="scientific">Glycine max</name>
    <name type="common">Soybean</name>
    <name type="synonym">Glycine hispida</name>
    <dbReference type="NCBI Taxonomy" id="3847"/>
    <lineage>
        <taxon>Eukaryota</taxon>
        <taxon>Viridiplantae</taxon>
        <taxon>Streptophyta</taxon>
        <taxon>Embryophyta</taxon>
        <taxon>Tracheophyta</taxon>
        <taxon>Spermatophyta</taxon>
        <taxon>Magnoliopsida</taxon>
        <taxon>eudicotyledons</taxon>
        <taxon>Gunneridae</taxon>
        <taxon>Pentapetalae</taxon>
        <taxon>rosids</taxon>
        <taxon>fabids</taxon>
        <taxon>Fabales</taxon>
        <taxon>Fabaceae</taxon>
        <taxon>Papilionoideae</taxon>
        <taxon>50 kb inversion clade</taxon>
        <taxon>NPAAA clade</taxon>
        <taxon>indigoferoid/millettioid clade</taxon>
        <taxon>Phaseoleae</taxon>
        <taxon>Glycine</taxon>
        <taxon>Glycine subgen. Soja</taxon>
    </lineage>
</organism>
<dbReference type="EC" id="1.11.1.6"/>
<dbReference type="EMBL" id="AF035255">
    <property type="protein sequence ID" value="AAB88172.1"/>
    <property type="molecule type" value="mRNA"/>
</dbReference>
<dbReference type="RefSeq" id="NP_001237571.1">
    <property type="nucleotide sequence ID" value="NM_001250642.2"/>
</dbReference>
<dbReference type="SMR" id="O48561"/>
<dbReference type="FunCoup" id="O48561">
    <property type="interactions" value="2996"/>
</dbReference>
<dbReference type="STRING" id="3847.O48561"/>
<dbReference type="PeroxiBase" id="6266">
    <property type="entry name" value="GmKat04"/>
</dbReference>
<dbReference type="PaxDb" id="3847-GLYMA04G01920.1"/>
<dbReference type="ProMEX" id="O48561"/>
<dbReference type="EnsemblPlants" id="KRH60933">
    <property type="protein sequence ID" value="KRH60933"/>
    <property type="gene ID" value="GLYMA_04G017500"/>
</dbReference>
<dbReference type="GeneID" id="547511"/>
<dbReference type="Gramene" id="KRH60933">
    <property type="protein sequence ID" value="KRH60933"/>
    <property type="gene ID" value="GLYMA_04G017500"/>
</dbReference>
<dbReference type="KEGG" id="gmx:547511"/>
<dbReference type="eggNOG" id="KOG0047">
    <property type="taxonomic scope" value="Eukaryota"/>
</dbReference>
<dbReference type="HOGENOM" id="CLU_010645_2_0_1"/>
<dbReference type="InParanoid" id="O48561"/>
<dbReference type="OrthoDB" id="6880011at2759"/>
<dbReference type="Proteomes" id="UP000008827">
    <property type="component" value="Chromosome 4"/>
</dbReference>
<dbReference type="GO" id="GO:0005737">
    <property type="term" value="C:cytoplasm"/>
    <property type="evidence" value="ECO:0000318"/>
    <property type="project" value="GO_Central"/>
</dbReference>
<dbReference type="GO" id="GO:0009514">
    <property type="term" value="C:glyoxysome"/>
    <property type="evidence" value="ECO:0007669"/>
    <property type="project" value="UniProtKB-SubCell"/>
</dbReference>
<dbReference type="GO" id="GO:0005777">
    <property type="term" value="C:peroxisome"/>
    <property type="evidence" value="ECO:0000318"/>
    <property type="project" value="GO_Central"/>
</dbReference>
<dbReference type="GO" id="GO:0005886">
    <property type="term" value="C:plasma membrane"/>
    <property type="evidence" value="ECO:0000318"/>
    <property type="project" value="GO_Central"/>
</dbReference>
<dbReference type="GO" id="GO:0004096">
    <property type="term" value="F:catalase activity"/>
    <property type="evidence" value="ECO:0000318"/>
    <property type="project" value="GO_Central"/>
</dbReference>
<dbReference type="GO" id="GO:0020037">
    <property type="term" value="F:heme binding"/>
    <property type="evidence" value="ECO:0000318"/>
    <property type="project" value="GO_Central"/>
</dbReference>
<dbReference type="GO" id="GO:0046872">
    <property type="term" value="F:metal ion binding"/>
    <property type="evidence" value="ECO:0007669"/>
    <property type="project" value="UniProtKB-KW"/>
</dbReference>
<dbReference type="GO" id="GO:0042744">
    <property type="term" value="P:hydrogen peroxide catabolic process"/>
    <property type="evidence" value="ECO:0000318"/>
    <property type="project" value="GO_Central"/>
</dbReference>
<dbReference type="GO" id="GO:0042542">
    <property type="term" value="P:response to hydrogen peroxide"/>
    <property type="evidence" value="ECO:0000318"/>
    <property type="project" value="GO_Central"/>
</dbReference>
<dbReference type="CDD" id="cd08154">
    <property type="entry name" value="catalase_clade_1"/>
    <property type="match status" value="1"/>
</dbReference>
<dbReference type="FunFam" id="2.40.180.10:FF:000002">
    <property type="entry name" value="Catalase"/>
    <property type="match status" value="1"/>
</dbReference>
<dbReference type="Gene3D" id="2.40.180.10">
    <property type="entry name" value="Catalase core domain"/>
    <property type="match status" value="1"/>
</dbReference>
<dbReference type="InterPro" id="IPR018028">
    <property type="entry name" value="Catalase"/>
</dbReference>
<dbReference type="InterPro" id="IPR024708">
    <property type="entry name" value="Catalase_AS"/>
</dbReference>
<dbReference type="InterPro" id="IPR024711">
    <property type="entry name" value="Catalase_clade1/3"/>
</dbReference>
<dbReference type="InterPro" id="IPR011614">
    <property type="entry name" value="Catalase_core"/>
</dbReference>
<dbReference type="InterPro" id="IPR002226">
    <property type="entry name" value="Catalase_haem_BS"/>
</dbReference>
<dbReference type="InterPro" id="IPR010582">
    <property type="entry name" value="Catalase_immune_responsive"/>
</dbReference>
<dbReference type="InterPro" id="IPR020835">
    <property type="entry name" value="Catalase_sf"/>
</dbReference>
<dbReference type="PANTHER" id="PTHR11465">
    <property type="entry name" value="CATALASE"/>
    <property type="match status" value="1"/>
</dbReference>
<dbReference type="PANTHER" id="PTHR11465:SF23">
    <property type="entry name" value="CATALASE-2"/>
    <property type="match status" value="1"/>
</dbReference>
<dbReference type="Pfam" id="PF00199">
    <property type="entry name" value="Catalase"/>
    <property type="match status" value="1"/>
</dbReference>
<dbReference type="Pfam" id="PF06628">
    <property type="entry name" value="Catalase-rel"/>
    <property type="match status" value="1"/>
</dbReference>
<dbReference type="PIRSF" id="PIRSF038928">
    <property type="entry name" value="Catalase_clade1-3"/>
    <property type="match status" value="1"/>
</dbReference>
<dbReference type="PRINTS" id="PR00067">
    <property type="entry name" value="CATALASE"/>
</dbReference>
<dbReference type="SMART" id="SM01060">
    <property type="entry name" value="Catalase"/>
    <property type="match status" value="1"/>
</dbReference>
<dbReference type="SUPFAM" id="SSF56634">
    <property type="entry name" value="Heme-dependent catalase-like"/>
    <property type="match status" value="1"/>
</dbReference>
<dbReference type="PROSITE" id="PS00437">
    <property type="entry name" value="CATALASE_1"/>
    <property type="match status" value="1"/>
</dbReference>
<dbReference type="PROSITE" id="PS00438">
    <property type="entry name" value="CATALASE_2"/>
    <property type="match status" value="1"/>
</dbReference>
<dbReference type="PROSITE" id="PS51402">
    <property type="entry name" value="CATALASE_3"/>
    <property type="match status" value="1"/>
</dbReference>
<name>CATA4_SOYBN</name>
<comment type="function">
    <text>Occurs in almost all aerobically respiring organisms and serves to protect cells from the toxic effects of hydrogen peroxide.</text>
</comment>
<comment type="catalytic activity">
    <reaction evidence="2">
        <text>2 H2O2 = O2 + 2 H2O</text>
        <dbReference type="Rhea" id="RHEA:20309"/>
        <dbReference type="ChEBI" id="CHEBI:15377"/>
        <dbReference type="ChEBI" id="CHEBI:15379"/>
        <dbReference type="ChEBI" id="CHEBI:16240"/>
        <dbReference type="EC" id="1.11.1.6"/>
    </reaction>
</comment>
<comment type="cofactor">
    <cofactor>
        <name>heme</name>
        <dbReference type="ChEBI" id="CHEBI:30413"/>
    </cofactor>
</comment>
<comment type="subunit">
    <text evidence="1">Homotetramer.</text>
</comment>
<comment type="subcellular location">
    <subcellularLocation>
        <location evidence="1">Peroxisome</location>
    </subcellularLocation>
    <subcellularLocation>
        <location evidence="1">Glyoxysome</location>
    </subcellularLocation>
</comment>
<comment type="similarity">
    <text evidence="3">Belongs to the catalase family.</text>
</comment>
<feature type="chain" id="PRO_0000084965" description="Catalase-4">
    <location>
        <begin position="1"/>
        <end position="492"/>
    </location>
</feature>
<feature type="active site" evidence="2">
    <location>
        <position position="65"/>
    </location>
</feature>
<feature type="active site" evidence="2">
    <location>
        <position position="138"/>
    </location>
</feature>
<feature type="binding site" description="axial binding residue" evidence="1">
    <location>
        <position position="348"/>
    </location>
    <ligand>
        <name>heme</name>
        <dbReference type="ChEBI" id="CHEBI:30413"/>
    </ligand>
    <ligandPart>
        <name>Fe</name>
        <dbReference type="ChEBI" id="CHEBI:18248"/>
    </ligandPart>
</feature>
<sequence length="492" mass="56737">MDPYKHRPSSAFNSPFWTTNSGAPIWNNNSSLTVGARGPILLEDYHLVEKLANFDRERIPERVVHARGASAKGFFEVTHDISHLTCADFLRAPGVQTPVIVRFSTVIHERGSPETLRDPRGFAVKFYTREGNFDLVGNNLPVFFVRDGMKFPDMVHALKPNPKNHIQENWRILDFFSHFPESLHMFTFLFDDLGVPQDYRHMDGFGVNTYTLINKAGKAVYVKFHWKTTSGIKCLLEEEAIKVGGANHSHATQDLHDSIAAGNYPEWKLFVQTIDPEHEDKFDFDPLDVTKTWPEDIIPLQPVGRLVLNKNIDNFFAENEQLAFCPAIVVPGVYYSDDKMLQTRIFSYADSQRHRLGPNYLQLPANAPKCAHHNNHHEGFMNFIHRDEEVNYFPSRYDPVRHAERFPIPPAICSGRREKCGIEKENNFKQPGERYRSWAPDRQDRFARRWVDALSDPRVTHEIRSVWISYWSQADRSLGQKIASHLSTRPNI</sequence>